<dbReference type="EC" id="3.1.-.-" evidence="1"/>
<dbReference type="EMBL" id="AL123456">
    <property type="protein sequence ID" value="CCP44878.1"/>
    <property type="molecule type" value="Genomic_DNA"/>
</dbReference>
<dbReference type="PIR" id="D70841">
    <property type="entry name" value="D70841"/>
</dbReference>
<dbReference type="RefSeq" id="NP_216619.1">
    <property type="nucleotide sequence ID" value="NC_000962.3"/>
</dbReference>
<dbReference type="RefSeq" id="WP_003410811.1">
    <property type="nucleotide sequence ID" value="NZ_NVQJ01000084.1"/>
</dbReference>
<dbReference type="SMR" id="O53501"/>
<dbReference type="STRING" id="83332.Rv2103c"/>
<dbReference type="PaxDb" id="83332-Rv2103c"/>
<dbReference type="DNASU" id="888003"/>
<dbReference type="GeneID" id="888003"/>
<dbReference type="KEGG" id="mtu:Rv2103c"/>
<dbReference type="KEGG" id="mtv:RVBD_2103c"/>
<dbReference type="TubercuList" id="Rv2103c"/>
<dbReference type="eggNOG" id="COG1848">
    <property type="taxonomic scope" value="Bacteria"/>
</dbReference>
<dbReference type="InParanoid" id="O53501"/>
<dbReference type="OrthoDB" id="556169at2"/>
<dbReference type="PhylomeDB" id="O53501"/>
<dbReference type="Proteomes" id="UP000001584">
    <property type="component" value="Chromosome"/>
</dbReference>
<dbReference type="GO" id="GO:0005576">
    <property type="term" value="C:extracellular region"/>
    <property type="evidence" value="ECO:0007669"/>
    <property type="project" value="UniProtKB-SubCell"/>
</dbReference>
<dbReference type="GO" id="GO:0000287">
    <property type="term" value="F:magnesium ion binding"/>
    <property type="evidence" value="ECO:0007669"/>
    <property type="project" value="UniProtKB-UniRule"/>
</dbReference>
<dbReference type="GO" id="GO:0004540">
    <property type="term" value="F:RNA nuclease activity"/>
    <property type="evidence" value="ECO:0007669"/>
    <property type="project" value="InterPro"/>
</dbReference>
<dbReference type="GO" id="GO:0045926">
    <property type="term" value="P:negative regulation of growth"/>
    <property type="evidence" value="ECO:0007669"/>
    <property type="project" value="UniProtKB-ARBA"/>
</dbReference>
<dbReference type="CDD" id="cd18678">
    <property type="entry name" value="PIN_MtVapC25_VapC33-like"/>
    <property type="match status" value="1"/>
</dbReference>
<dbReference type="Gene3D" id="3.40.50.1010">
    <property type="entry name" value="5'-nuclease"/>
    <property type="match status" value="1"/>
</dbReference>
<dbReference type="HAMAP" id="MF_00265">
    <property type="entry name" value="VapC_Nob1"/>
    <property type="match status" value="1"/>
</dbReference>
<dbReference type="InterPro" id="IPR006226">
    <property type="entry name" value="Mtu_PIN"/>
</dbReference>
<dbReference type="InterPro" id="IPR029060">
    <property type="entry name" value="PIN-like_dom_sf"/>
</dbReference>
<dbReference type="InterPro" id="IPR002716">
    <property type="entry name" value="PIN_dom"/>
</dbReference>
<dbReference type="InterPro" id="IPR022907">
    <property type="entry name" value="VapC_family"/>
</dbReference>
<dbReference type="NCBIfam" id="TIGR00028">
    <property type="entry name" value="Mtu_PIN_fam"/>
    <property type="match status" value="1"/>
</dbReference>
<dbReference type="Pfam" id="PF01850">
    <property type="entry name" value="PIN"/>
    <property type="match status" value="1"/>
</dbReference>
<dbReference type="SUPFAM" id="SSF88723">
    <property type="entry name" value="PIN domain-like"/>
    <property type="match status" value="1"/>
</dbReference>
<keyword id="KW-0378">Hydrolase</keyword>
<keyword id="KW-0460">Magnesium</keyword>
<keyword id="KW-0479">Metal-binding</keyword>
<keyword id="KW-0540">Nuclease</keyword>
<keyword id="KW-1185">Reference proteome</keyword>
<keyword id="KW-0964">Secreted</keyword>
<keyword id="KW-1277">Toxin-antitoxin system</keyword>
<organism>
    <name type="scientific">Mycobacterium tuberculosis (strain ATCC 25618 / H37Rv)</name>
    <dbReference type="NCBI Taxonomy" id="83332"/>
    <lineage>
        <taxon>Bacteria</taxon>
        <taxon>Bacillati</taxon>
        <taxon>Actinomycetota</taxon>
        <taxon>Actinomycetes</taxon>
        <taxon>Mycobacteriales</taxon>
        <taxon>Mycobacteriaceae</taxon>
        <taxon>Mycobacterium</taxon>
        <taxon>Mycobacterium tuberculosis complex</taxon>
    </lineage>
</organism>
<reference key="1">
    <citation type="journal article" date="1998" name="Nature">
        <title>Deciphering the biology of Mycobacterium tuberculosis from the complete genome sequence.</title>
        <authorList>
            <person name="Cole S.T."/>
            <person name="Brosch R."/>
            <person name="Parkhill J."/>
            <person name="Garnier T."/>
            <person name="Churcher C.M."/>
            <person name="Harris D.E."/>
            <person name="Gordon S.V."/>
            <person name="Eiglmeier K."/>
            <person name="Gas S."/>
            <person name="Barry C.E. III"/>
            <person name="Tekaia F."/>
            <person name="Badcock K."/>
            <person name="Basham D."/>
            <person name="Brown D."/>
            <person name="Chillingworth T."/>
            <person name="Connor R."/>
            <person name="Davies R.M."/>
            <person name="Devlin K."/>
            <person name="Feltwell T."/>
            <person name="Gentles S."/>
            <person name="Hamlin N."/>
            <person name="Holroyd S."/>
            <person name="Hornsby T."/>
            <person name="Jagels K."/>
            <person name="Krogh A."/>
            <person name="McLean J."/>
            <person name="Moule S."/>
            <person name="Murphy L.D."/>
            <person name="Oliver S."/>
            <person name="Osborne J."/>
            <person name="Quail M.A."/>
            <person name="Rajandream M.A."/>
            <person name="Rogers J."/>
            <person name="Rutter S."/>
            <person name="Seeger K."/>
            <person name="Skelton S."/>
            <person name="Squares S."/>
            <person name="Squares R."/>
            <person name="Sulston J.E."/>
            <person name="Taylor K."/>
            <person name="Whitehead S."/>
            <person name="Barrell B.G."/>
        </authorList>
    </citation>
    <scope>NUCLEOTIDE SEQUENCE [LARGE SCALE GENOMIC DNA]</scope>
    <source>
        <strain>ATCC 25618 / H37Rv</strain>
    </source>
</reference>
<reference key="2">
    <citation type="journal article" date="2009" name="PLoS Genet.">
        <title>Comprehensive functional analysis of Mycobacterium tuberculosis toxin-antitoxin systems: implications for pathogenesis, stress responses, and evolution.</title>
        <authorList>
            <person name="Ramage H.R."/>
            <person name="Connolly L.E."/>
            <person name="Cox J.S."/>
        </authorList>
    </citation>
    <scope>EXPRESSION IN M.SMEGMATIS</scope>
    <scope>FUNCTION AS A TOXIN</scope>
    <source>
        <strain>ATCC 35801 / TMC 107 / Erdman</strain>
    </source>
</reference>
<reference key="3">
    <citation type="journal article" date="2011" name="Mol. Cell. Proteomics">
        <title>Proteogenomic analysis of Mycobacterium tuberculosis by high resolution mass spectrometry.</title>
        <authorList>
            <person name="Kelkar D.S."/>
            <person name="Kumar D."/>
            <person name="Kumar P."/>
            <person name="Balakrishnan L."/>
            <person name="Muthusamy B."/>
            <person name="Yadav A.K."/>
            <person name="Shrivastava P."/>
            <person name="Marimuthu A."/>
            <person name="Anand S."/>
            <person name="Sundaram H."/>
            <person name="Kingsbury R."/>
            <person name="Harsha H.C."/>
            <person name="Nair B."/>
            <person name="Prasad T.S."/>
            <person name="Chauhan D.S."/>
            <person name="Katoch K."/>
            <person name="Katoch V.M."/>
            <person name="Kumar P."/>
            <person name="Chaerkady R."/>
            <person name="Ramachandran S."/>
            <person name="Dash D."/>
            <person name="Pandey A."/>
        </authorList>
    </citation>
    <scope>IDENTIFICATION BY MASS SPECTROMETRY [LARGE SCALE ANALYSIS]</scope>
    <source>
        <strain>ATCC 25618 / H37Rv</strain>
    </source>
</reference>
<reference key="4">
    <citation type="journal article" date="2013" name="Mol. Cell. Proteomics">
        <title>Proteomic profiling of Mycobacterium tuberculosis identifies nutrient-starvation-responsive toxin-antitoxin systems.</title>
        <authorList>
            <person name="Albrethsen J."/>
            <person name="Agner J."/>
            <person name="Piersma S.R."/>
            <person name="Hoejrup P."/>
            <person name="Pham T.V."/>
            <person name="Weldingh K."/>
            <person name="Jimenez C.R."/>
            <person name="Andersen P."/>
            <person name="Rosenkrands I."/>
        </authorList>
    </citation>
    <scope>IDENTIFICATION BY MASS SPECTROMETRY</scope>
    <scope>SUBCELLULAR LOCATION</scope>
    <source>
        <strain>ATCC 27294 / TMC 102 / H37Rv</strain>
    </source>
</reference>
<gene>
    <name evidence="1" type="primary">vapC37</name>
    <name type="ordered locus">Rv2103c</name>
</gene>
<feature type="chain" id="PRO_0000407892" description="Ribonuclease VapC37">
    <location>
        <begin position="1"/>
        <end position="144"/>
    </location>
</feature>
<feature type="domain" description="PINc" evidence="1">
    <location>
        <begin position="3"/>
        <end position="137"/>
    </location>
</feature>
<feature type="binding site" evidence="1">
    <location>
        <position position="5"/>
    </location>
    <ligand>
        <name>Mg(2+)</name>
        <dbReference type="ChEBI" id="CHEBI:18420"/>
    </ligand>
</feature>
<feature type="binding site" evidence="1">
    <location>
        <position position="90"/>
    </location>
    <ligand>
        <name>Mg(2+)</name>
        <dbReference type="ChEBI" id="CHEBI:18420"/>
    </ligand>
</feature>
<comment type="function">
    <text evidence="2">Probable toxic component of a type II toxin-antitoxin (TA) system. An RNase. Upon expression in M.smegmatis inhibits colony formation. The putative cognate antitoxin is VapB37.</text>
</comment>
<comment type="cofactor">
    <cofactor evidence="1">
        <name>Mg(2+)</name>
        <dbReference type="ChEBI" id="CHEBI:18420"/>
    </cofactor>
</comment>
<comment type="subcellular location">
    <subcellularLocation>
        <location>Secreted</location>
    </subcellularLocation>
    <text evidence="3">Following 6 weeks of nutrient starvation.</text>
</comment>
<comment type="similarity">
    <text evidence="1">Belongs to the PINc/VapC protein family.</text>
</comment>
<sequence length="144" mass="15662">MKIVDANVLLYAVNTTSEHHKPSLRWLDGALSGADRVGFAWVPLLAFVRLATKVGLFPRPLPREAAITQVADWLAAPSAVLVNPTVRHADILARMLTYVGTGANLVNDAHLAALAVEHRASIVSYDSDFGRFEGVRWDQPPALL</sequence>
<protein>
    <recommendedName>
        <fullName evidence="1">Ribonuclease VapC37</fullName>
        <shortName evidence="1">RNase VapC37</shortName>
        <ecNumber evidence="1">3.1.-.-</ecNumber>
    </recommendedName>
    <alternativeName>
        <fullName evidence="1">Toxin VapC37</fullName>
    </alternativeName>
</protein>
<proteinExistence type="evidence at protein level"/>
<name>VPC37_MYCTU</name>
<accession>O53501</accession>
<accession>L0TA81</accession>
<evidence type="ECO:0000255" key="1">
    <source>
        <dbReference type="HAMAP-Rule" id="MF_00265"/>
    </source>
</evidence>
<evidence type="ECO:0000269" key="2">
    <source>
    </source>
</evidence>
<evidence type="ECO:0000269" key="3">
    <source>
    </source>
</evidence>